<organism>
    <name type="scientific">Homo sapiens</name>
    <name type="common">Human</name>
    <dbReference type="NCBI Taxonomy" id="9606"/>
    <lineage>
        <taxon>Eukaryota</taxon>
        <taxon>Metazoa</taxon>
        <taxon>Chordata</taxon>
        <taxon>Craniata</taxon>
        <taxon>Vertebrata</taxon>
        <taxon>Euteleostomi</taxon>
        <taxon>Mammalia</taxon>
        <taxon>Eutheria</taxon>
        <taxon>Euarchontoglires</taxon>
        <taxon>Primates</taxon>
        <taxon>Haplorrhini</taxon>
        <taxon>Catarrhini</taxon>
        <taxon>Hominidae</taxon>
        <taxon>Homo</taxon>
    </lineage>
</organism>
<proteinExistence type="evidence at protein level"/>
<keyword id="KW-0007">Acetylation</keyword>
<keyword id="KW-0963">Cytoplasm</keyword>
<keyword id="KW-0378">Hydrolase</keyword>
<keyword id="KW-0449">Lipoprotein</keyword>
<keyword id="KW-0460">Magnesium</keyword>
<keyword id="KW-0464">Manganese</keyword>
<keyword id="KW-0472">Membrane</keyword>
<keyword id="KW-0479">Metal-binding</keyword>
<keyword id="KW-0488">Methylation</keyword>
<keyword id="KW-0519">Myristate</keyword>
<keyword id="KW-0597">Phosphoprotein</keyword>
<keyword id="KW-0904">Protein phosphatase</keyword>
<keyword id="KW-1267">Proteomics identification</keyword>
<keyword id="KW-1185">Reference proteome</keyword>
<keyword id="KW-0677">Repeat</keyword>
<protein>
    <recommendedName>
        <fullName>Protein phosphatase 1G</fullName>
        <ecNumber evidence="2">3.1.3.16</ecNumber>
    </recommendedName>
    <alternativeName>
        <fullName>Protein phosphatase 1C</fullName>
    </alternativeName>
    <alternativeName>
        <fullName>Protein phosphatase 2C isoform gamma</fullName>
        <shortName>PP2C-gamma</shortName>
    </alternativeName>
    <alternativeName>
        <fullName>Protein phosphatase magnesium-dependent 1 gamma</fullName>
    </alternativeName>
</protein>
<sequence>MGAYLSQPNTVKCSGDGVGAPRLPLPYGFSAMQGWRVSMEDAHNCIPELDSETAMFSVYDGHGGEEVALYCAKYLPDIIKDQKAYKEGKLQKALEDAFLAIDAKLTTEEVIKELAQIAGRPTEDEDEKEKVADEDDVDNEEAALLHEEATMTIEELLTRYGQNCHKGPPHSKSGGGTGEEPGSQGLNGEAGPEDSTRETPSQENGPTAKAYTGFSSNSERGTEAGQVGEPGIPTGEAGPSCSSASDKLPRVAKSKFFEDSEDESDEAEEEEEDSEECSEEEDGYSSEEAENEEDEDDTEEAEEDDEEEEEEMMVPGMEGKEEPGSDSGTTAVVALIRGKQLIVANAGDSRCVVSEAGKALDMSYDHKPEDEVELARIKNAGGKVTMDGRVNGGLNLSRAIGDHFYKRNKNLPPEEQMISALPDIKVLTLTDDHEFMVIACDGIWNVMSSQEVVDFIQSKISQRDENGELRLLSSIVEELLDQCLAPDTSGDGTGCDNMTCIIICFKPRNTAELQPESGKRKLEEVLSTEGAEENGNSDKKKKAKRD</sequence>
<accession>O15355</accession>
<name>PPM1G_HUMAN</name>
<dbReference type="EC" id="3.1.3.16" evidence="2"/>
<dbReference type="EMBL" id="Y13936">
    <property type="protein sequence ID" value="CAA74245.1"/>
    <property type="molecule type" value="mRNA"/>
</dbReference>
<dbReference type="EMBL" id="BC022061">
    <property type="protein sequence ID" value="AAH22061.1"/>
    <property type="molecule type" value="mRNA"/>
</dbReference>
<dbReference type="EMBL" id="BC000057">
    <property type="protein sequence ID" value="AAH00057.1"/>
    <property type="molecule type" value="mRNA"/>
</dbReference>
<dbReference type="CCDS" id="CCDS1752.1"/>
<dbReference type="RefSeq" id="NP_817092.1">
    <property type="nucleotide sequence ID" value="NM_177983.3"/>
</dbReference>
<dbReference type="SMR" id="O15355"/>
<dbReference type="BioGRID" id="111491">
    <property type="interactions" value="354"/>
</dbReference>
<dbReference type="CORUM" id="O15355"/>
<dbReference type="DIP" id="DIP-29404N"/>
<dbReference type="FunCoup" id="O15355">
    <property type="interactions" value="4327"/>
</dbReference>
<dbReference type="IntAct" id="O15355">
    <property type="interactions" value="182"/>
</dbReference>
<dbReference type="MINT" id="O15355"/>
<dbReference type="STRING" id="9606.ENSP00000342778"/>
<dbReference type="BindingDB" id="O15355"/>
<dbReference type="ChEMBL" id="CHEMBL3351199"/>
<dbReference type="DEPOD" id="PPM1G"/>
<dbReference type="GlyGen" id="O15355">
    <property type="glycosylation" value="2 sites, 1 O-linked glycan (2 sites)"/>
</dbReference>
<dbReference type="iPTMnet" id="O15355"/>
<dbReference type="PhosphoSitePlus" id="O15355"/>
<dbReference type="SwissPalm" id="O15355"/>
<dbReference type="BioMuta" id="PPM1G"/>
<dbReference type="jPOST" id="O15355"/>
<dbReference type="MassIVE" id="O15355"/>
<dbReference type="PaxDb" id="9606-ENSP00000342778"/>
<dbReference type="PeptideAtlas" id="O15355"/>
<dbReference type="ProteomicsDB" id="48608"/>
<dbReference type="Pumba" id="O15355"/>
<dbReference type="Antibodypedia" id="28474">
    <property type="antibodies" value="413 antibodies from 32 providers"/>
</dbReference>
<dbReference type="DNASU" id="5496"/>
<dbReference type="Ensembl" id="ENST00000344034.5">
    <property type="protein sequence ID" value="ENSP00000342778.4"/>
    <property type="gene ID" value="ENSG00000115241.11"/>
</dbReference>
<dbReference type="GeneID" id="5496"/>
<dbReference type="KEGG" id="hsa:5496"/>
<dbReference type="MANE-Select" id="ENST00000344034.5">
    <property type="protein sequence ID" value="ENSP00000342778.4"/>
    <property type="RefSeq nucleotide sequence ID" value="NM_177983.3"/>
    <property type="RefSeq protein sequence ID" value="NP_817092.1"/>
</dbReference>
<dbReference type="AGR" id="HGNC:9278"/>
<dbReference type="CTD" id="5496"/>
<dbReference type="DisGeNET" id="5496"/>
<dbReference type="GeneCards" id="PPM1G"/>
<dbReference type="HGNC" id="HGNC:9278">
    <property type="gene designation" value="PPM1G"/>
</dbReference>
<dbReference type="HPA" id="ENSG00000115241">
    <property type="expression patterns" value="Tissue enhanced (testis)"/>
</dbReference>
<dbReference type="MIM" id="605119">
    <property type="type" value="gene"/>
</dbReference>
<dbReference type="neXtProt" id="NX_O15355"/>
<dbReference type="OpenTargets" id="ENSG00000115241"/>
<dbReference type="PharmGKB" id="PA33606"/>
<dbReference type="VEuPathDB" id="HostDB:ENSG00000115241"/>
<dbReference type="eggNOG" id="KOG0699">
    <property type="taxonomic scope" value="Eukaryota"/>
</dbReference>
<dbReference type="GeneTree" id="ENSGT00940000158427"/>
<dbReference type="HOGENOM" id="CLU_013173_13_1_1"/>
<dbReference type="InParanoid" id="O15355"/>
<dbReference type="OMA" id="YCAMKLP"/>
<dbReference type="OrthoDB" id="10264738at2759"/>
<dbReference type="PAN-GO" id="O15355">
    <property type="GO annotations" value="2 GO annotations based on evolutionary models"/>
</dbReference>
<dbReference type="PhylomeDB" id="O15355"/>
<dbReference type="TreeFam" id="TF354280"/>
<dbReference type="PathwayCommons" id="O15355"/>
<dbReference type="SignaLink" id="O15355"/>
<dbReference type="SIGNOR" id="O15355"/>
<dbReference type="BioGRID-ORCS" id="5496">
    <property type="hits" value="94 hits in 1185 CRISPR screens"/>
</dbReference>
<dbReference type="ChiTaRS" id="PPM1G">
    <property type="organism name" value="human"/>
</dbReference>
<dbReference type="GeneWiki" id="PPM1G"/>
<dbReference type="GenomeRNAi" id="5496"/>
<dbReference type="Pharos" id="O15355">
    <property type="development level" value="Tbio"/>
</dbReference>
<dbReference type="PRO" id="PR:O15355"/>
<dbReference type="Proteomes" id="UP000005640">
    <property type="component" value="Chromosome 2"/>
</dbReference>
<dbReference type="RNAct" id="O15355">
    <property type="molecule type" value="protein"/>
</dbReference>
<dbReference type="Bgee" id="ENSG00000115241">
    <property type="expression patterns" value="Expressed in left testis and 200 other cell types or tissues"/>
</dbReference>
<dbReference type="ExpressionAtlas" id="O15355">
    <property type="expression patterns" value="baseline and differential"/>
</dbReference>
<dbReference type="GO" id="GO:0005737">
    <property type="term" value="C:cytoplasm"/>
    <property type="evidence" value="ECO:0007669"/>
    <property type="project" value="UniProtKB-SubCell"/>
</dbReference>
<dbReference type="GO" id="GO:0016020">
    <property type="term" value="C:membrane"/>
    <property type="evidence" value="ECO:0007669"/>
    <property type="project" value="UniProtKB-SubCell"/>
</dbReference>
<dbReference type="GO" id="GO:0005654">
    <property type="term" value="C:nucleoplasm"/>
    <property type="evidence" value="ECO:0000314"/>
    <property type="project" value="HPA"/>
</dbReference>
<dbReference type="GO" id="GO:0005634">
    <property type="term" value="C:nucleus"/>
    <property type="evidence" value="ECO:0000304"/>
    <property type="project" value="ProtInc"/>
</dbReference>
<dbReference type="GO" id="GO:0046872">
    <property type="term" value="F:metal ion binding"/>
    <property type="evidence" value="ECO:0007669"/>
    <property type="project" value="UniProtKB-KW"/>
</dbReference>
<dbReference type="GO" id="GO:0004722">
    <property type="term" value="F:protein serine/threonine phosphatase activity"/>
    <property type="evidence" value="ECO:0000314"/>
    <property type="project" value="UniProtKB"/>
</dbReference>
<dbReference type="GO" id="GO:0035970">
    <property type="term" value="P:peptidyl-threonine dephosphorylation"/>
    <property type="evidence" value="ECO:0000314"/>
    <property type="project" value="UniProtKB"/>
</dbReference>
<dbReference type="GO" id="GO:0006470">
    <property type="term" value="P:protein dephosphorylation"/>
    <property type="evidence" value="ECO:0000304"/>
    <property type="project" value="ProtInc"/>
</dbReference>
<dbReference type="GO" id="GO:0051726">
    <property type="term" value="P:regulation of cell cycle"/>
    <property type="evidence" value="ECO:0000304"/>
    <property type="project" value="ProtInc"/>
</dbReference>
<dbReference type="GO" id="GO:0007165">
    <property type="term" value="P:signal transduction"/>
    <property type="evidence" value="ECO:0000318"/>
    <property type="project" value="GO_Central"/>
</dbReference>
<dbReference type="CDD" id="cd00143">
    <property type="entry name" value="PP2Cc"/>
    <property type="match status" value="2"/>
</dbReference>
<dbReference type="FunFam" id="3.60.40.10:FF:000023">
    <property type="entry name" value="Protein phosphatase, Mg2+/Mn2+-dependent, 1G"/>
    <property type="match status" value="1"/>
</dbReference>
<dbReference type="FunFam" id="3.60.40.10:FF:000029">
    <property type="entry name" value="Protein phosphatase, Mg2+/Mn2+-dependent, 1G"/>
    <property type="match status" value="1"/>
</dbReference>
<dbReference type="Gene3D" id="3.60.40.10">
    <property type="entry name" value="PPM-type phosphatase domain"/>
    <property type="match status" value="2"/>
</dbReference>
<dbReference type="InterPro" id="IPR015655">
    <property type="entry name" value="PP2C"/>
</dbReference>
<dbReference type="InterPro" id="IPR000222">
    <property type="entry name" value="PP2C_BS"/>
</dbReference>
<dbReference type="InterPro" id="IPR036457">
    <property type="entry name" value="PPM-type-like_dom_sf"/>
</dbReference>
<dbReference type="InterPro" id="IPR001932">
    <property type="entry name" value="PPM-type_phosphatase-like_dom"/>
</dbReference>
<dbReference type="PANTHER" id="PTHR13832:SF803">
    <property type="entry name" value="PROTEIN PHOSPHATASE 1G"/>
    <property type="match status" value="1"/>
</dbReference>
<dbReference type="PANTHER" id="PTHR13832">
    <property type="entry name" value="PROTEIN PHOSPHATASE 2C"/>
    <property type="match status" value="1"/>
</dbReference>
<dbReference type="Pfam" id="PF00481">
    <property type="entry name" value="PP2C"/>
    <property type="match status" value="2"/>
</dbReference>
<dbReference type="SMART" id="SM00332">
    <property type="entry name" value="PP2Cc"/>
    <property type="match status" value="1"/>
</dbReference>
<dbReference type="SUPFAM" id="SSF81606">
    <property type="entry name" value="PP2C-like"/>
    <property type="match status" value="1"/>
</dbReference>
<dbReference type="PROSITE" id="PS01032">
    <property type="entry name" value="PPM_1"/>
    <property type="match status" value="1"/>
</dbReference>
<dbReference type="PROSITE" id="PS51746">
    <property type="entry name" value="PPM_2"/>
    <property type="match status" value="1"/>
</dbReference>
<feature type="initiator methionine" description="Removed" evidence="6 7">
    <location>
        <position position="1"/>
    </location>
</feature>
<feature type="chain" id="PRO_0000057750" description="Protein phosphatase 1G">
    <location>
        <begin position="2"/>
        <end position="546"/>
    </location>
</feature>
<feature type="domain" description="PPM-type phosphatase" evidence="4">
    <location>
        <begin position="26"/>
        <end position="505"/>
    </location>
</feature>
<feature type="region of interest" description="Disordered" evidence="5">
    <location>
        <begin position="116"/>
        <end position="139"/>
    </location>
</feature>
<feature type="region of interest" description="Disordered" evidence="5">
    <location>
        <begin position="161"/>
        <end position="328"/>
    </location>
</feature>
<feature type="region of interest" description="Disordered" evidence="5">
    <location>
        <begin position="512"/>
        <end position="546"/>
    </location>
</feature>
<feature type="compositionally biased region" description="Acidic residues" evidence="5">
    <location>
        <begin position="123"/>
        <end position="139"/>
    </location>
</feature>
<feature type="compositionally biased region" description="Acidic residues" evidence="5">
    <location>
        <begin position="259"/>
        <end position="312"/>
    </location>
</feature>
<feature type="binding site" evidence="2">
    <location>
        <position position="60"/>
    </location>
    <ligand>
        <name>Mn(2+)</name>
        <dbReference type="ChEBI" id="CHEBI:29035"/>
        <label>1</label>
    </ligand>
</feature>
<feature type="binding site" evidence="2">
    <location>
        <position position="60"/>
    </location>
    <ligand>
        <name>Mn(2+)</name>
        <dbReference type="ChEBI" id="CHEBI:29035"/>
        <label>2</label>
    </ligand>
</feature>
<feature type="binding site" evidence="2">
    <location>
        <position position="61"/>
    </location>
    <ligand>
        <name>Mn(2+)</name>
        <dbReference type="ChEBI" id="CHEBI:29035"/>
        <label>1</label>
    </ligand>
</feature>
<feature type="binding site" evidence="2">
    <location>
        <position position="441"/>
    </location>
    <ligand>
        <name>Mn(2+)</name>
        <dbReference type="ChEBI" id="CHEBI:29035"/>
        <label>2</label>
    </ligand>
</feature>
<feature type="binding site" evidence="2">
    <location>
        <position position="496"/>
    </location>
    <ligand>
        <name>Mn(2+)</name>
        <dbReference type="ChEBI" id="CHEBI:29035"/>
        <label>2</label>
    </ligand>
</feature>
<feature type="modified residue" description="Omega-N-methylarginine" evidence="13">
    <location>
        <position position="22"/>
    </location>
</feature>
<feature type="modified residue" description="Phosphothreonine" evidence="12">
    <location>
        <position position="122"/>
    </location>
</feature>
<feature type="modified residue" description="Phosphoserine" evidence="9 12">
    <location>
        <position position="183"/>
    </location>
</feature>
<feature type="modified residue" description="N6-acetyllysine" evidence="10">
    <location>
        <position position="383"/>
    </location>
</feature>
<feature type="modified residue" description="Phosphoserine" evidence="11 12">
    <location>
        <position position="527"/>
    </location>
</feature>
<feature type="lipid moiety-binding region" description="N-myristoyl glycine" evidence="6 7">
    <location>
        <position position="2"/>
    </location>
</feature>
<reference key="1">
    <citation type="journal article" date="1997" name="FEBS Lett.">
        <title>PP2C gamma: a human protein phosphatase with a unique acidic domain.</title>
        <authorList>
            <person name="Travis S.M."/>
            <person name="Welsh M.J."/>
        </authorList>
    </citation>
    <scope>NUCLEOTIDE SEQUENCE [MRNA]</scope>
    <source>
        <tissue>Skeletal muscle</tissue>
    </source>
</reference>
<reference key="2">
    <citation type="journal article" date="2004" name="Genome Res.">
        <title>The status, quality, and expansion of the NIH full-length cDNA project: the Mammalian Gene Collection (MGC).</title>
        <authorList>
            <consortium name="The MGC Project Team"/>
        </authorList>
    </citation>
    <scope>NUCLEOTIDE SEQUENCE [LARGE SCALE MRNA]</scope>
    <source>
        <tissue>Placenta</tissue>
        <tissue>Skin</tissue>
    </source>
</reference>
<reference key="3">
    <citation type="journal article" date="2007" name="Science">
        <title>ATM and ATR substrate analysis reveals extensive protein networks responsive to DNA damage.</title>
        <authorList>
            <person name="Matsuoka S."/>
            <person name="Ballif B.A."/>
            <person name="Smogorzewska A."/>
            <person name="McDonald E.R. III"/>
            <person name="Hurov K.E."/>
            <person name="Luo J."/>
            <person name="Bakalarski C.E."/>
            <person name="Zhao Z."/>
            <person name="Solimini N."/>
            <person name="Lerenthal Y."/>
            <person name="Shiloh Y."/>
            <person name="Gygi S.P."/>
            <person name="Elledge S.J."/>
        </authorList>
    </citation>
    <scope>PHOSPHORYLATION [LARGE SCALE ANALYSIS] AT SER-183</scope>
    <scope>IDENTIFICATION BY MASS SPECTROMETRY [LARGE SCALE ANALYSIS]</scope>
    <source>
        <tissue>Embryonic kidney</tissue>
    </source>
</reference>
<reference key="4">
    <citation type="journal article" date="2008" name="Proc. Natl. Acad. Sci. U.S.A.">
        <title>A quantitative atlas of mitotic phosphorylation.</title>
        <authorList>
            <person name="Dephoure N."/>
            <person name="Zhou C."/>
            <person name="Villen J."/>
            <person name="Beausoleil S.A."/>
            <person name="Bakalarski C.E."/>
            <person name="Elledge S.J."/>
            <person name="Gygi S.P."/>
        </authorList>
    </citation>
    <scope>IDENTIFICATION BY MASS SPECTROMETRY [LARGE SCALE ANALYSIS]</scope>
    <source>
        <tissue>Cervix carcinoma</tissue>
    </source>
</reference>
<reference key="5">
    <citation type="journal article" date="2009" name="Sci. Signal.">
        <title>Quantitative phosphoproteomic analysis of T cell receptor signaling reveals system-wide modulation of protein-protein interactions.</title>
        <authorList>
            <person name="Mayya V."/>
            <person name="Lundgren D.H."/>
            <person name="Hwang S.-I."/>
            <person name="Rezaul K."/>
            <person name="Wu L."/>
            <person name="Eng J.K."/>
            <person name="Rodionov V."/>
            <person name="Han D.K."/>
        </authorList>
    </citation>
    <scope>IDENTIFICATION BY MASS SPECTROMETRY [LARGE SCALE ANALYSIS]</scope>
    <source>
        <tissue>Leukemic T-cell</tissue>
    </source>
</reference>
<reference key="6">
    <citation type="journal article" date="2009" name="Science">
        <title>Lysine acetylation targets protein complexes and co-regulates major cellular functions.</title>
        <authorList>
            <person name="Choudhary C."/>
            <person name="Kumar C."/>
            <person name="Gnad F."/>
            <person name="Nielsen M.L."/>
            <person name="Rehman M."/>
            <person name="Walther T.C."/>
            <person name="Olsen J.V."/>
            <person name="Mann M."/>
        </authorList>
    </citation>
    <scope>ACETYLATION [LARGE SCALE ANALYSIS] AT LYS-383</scope>
    <scope>IDENTIFICATION BY MASS SPECTROMETRY [LARGE SCALE ANALYSIS]</scope>
</reference>
<reference key="7">
    <citation type="journal article" date="2010" name="Sci. Signal.">
        <title>Quantitative phosphoproteomics reveals widespread full phosphorylation site occupancy during mitosis.</title>
        <authorList>
            <person name="Olsen J.V."/>
            <person name="Vermeulen M."/>
            <person name="Santamaria A."/>
            <person name="Kumar C."/>
            <person name="Miller M.L."/>
            <person name="Jensen L.J."/>
            <person name="Gnad F."/>
            <person name="Cox J."/>
            <person name="Jensen T.S."/>
            <person name="Nigg E.A."/>
            <person name="Brunak S."/>
            <person name="Mann M."/>
        </authorList>
    </citation>
    <scope>IDENTIFICATION BY MASS SPECTROMETRY [LARGE SCALE ANALYSIS]</scope>
    <source>
        <tissue>Cervix carcinoma</tissue>
    </source>
</reference>
<reference key="8">
    <citation type="journal article" date="2011" name="BMC Syst. Biol.">
        <title>Initial characterization of the human central proteome.</title>
        <authorList>
            <person name="Burkard T.R."/>
            <person name="Planyavsky M."/>
            <person name="Kaupe I."/>
            <person name="Breitwieser F.P."/>
            <person name="Buerckstuemmer T."/>
            <person name="Bennett K.L."/>
            <person name="Superti-Furga G."/>
            <person name="Colinge J."/>
        </authorList>
    </citation>
    <scope>IDENTIFICATION BY MASS SPECTROMETRY [LARGE SCALE ANALYSIS]</scope>
</reference>
<reference key="9">
    <citation type="journal article" date="2011" name="Sci. Signal.">
        <title>System-wide temporal characterization of the proteome and phosphoproteome of human embryonic stem cell differentiation.</title>
        <authorList>
            <person name="Rigbolt K.T."/>
            <person name="Prokhorova T.A."/>
            <person name="Akimov V."/>
            <person name="Henningsen J."/>
            <person name="Johansen P.T."/>
            <person name="Kratchmarova I."/>
            <person name="Kassem M."/>
            <person name="Mann M."/>
            <person name="Olsen J.V."/>
            <person name="Blagoev B."/>
        </authorList>
    </citation>
    <scope>PHOSPHORYLATION [LARGE SCALE ANALYSIS] AT SER-527</scope>
    <scope>IDENTIFICATION BY MASS SPECTROMETRY [LARGE SCALE ANALYSIS]</scope>
</reference>
<reference key="10">
    <citation type="journal article" date="2013" name="J. Proteome Res.">
        <title>Toward a comprehensive characterization of a human cancer cell phosphoproteome.</title>
        <authorList>
            <person name="Zhou H."/>
            <person name="Di Palma S."/>
            <person name="Preisinger C."/>
            <person name="Peng M."/>
            <person name="Polat A.N."/>
            <person name="Heck A.J."/>
            <person name="Mohammed S."/>
        </authorList>
    </citation>
    <scope>PHOSPHORYLATION [LARGE SCALE ANALYSIS] AT THR-122; SER-183 AND SER-527</scope>
    <scope>IDENTIFICATION BY MASS SPECTROMETRY [LARGE SCALE ANALYSIS]</scope>
    <source>
        <tissue>Cervix carcinoma</tissue>
        <tissue>Erythroleukemia</tissue>
    </source>
</reference>
<reference key="11">
    <citation type="journal article" date="2014" name="J. Proteomics">
        <title>An enzyme assisted RP-RPLC approach for in-depth analysis of human liver phosphoproteome.</title>
        <authorList>
            <person name="Bian Y."/>
            <person name="Song C."/>
            <person name="Cheng K."/>
            <person name="Dong M."/>
            <person name="Wang F."/>
            <person name="Huang J."/>
            <person name="Sun D."/>
            <person name="Wang L."/>
            <person name="Ye M."/>
            <person name="Zou H."/>
        </authorList>
    </citation>
    <scope>IDENTIFICATION BY MASS SPECTROMETRY [LARGE SCALE ANALYSIS]</scope>
    <source>
        <tissue>Liver</tissue>
    </source>
</reference>
<reference key="12">
    <citation type="journal article" date="2014" name="Mol. Cell. Proteomics">
        <title>Immunoaffinity enrichment and mass spectrometry analysis of protein methylation.</title>
        <authorList>
            <person name="Guo A."/>
            <person name="Gu H."/>
            <person name="Zhou J."/>
            <person name="Mulhern D."/>
            <person name="Wang Y."/>
            <person name="Lee K.A."/>
            <person name="Yang V."/>
            <person name="Aguiar M."/>
            <person name="Kornhauser J."/>
            <person name="Jia X."/>
            <person name="Ren J."/>
            <person name="Beausoleil S.A."/>
            <person name="Silva J.C."/>
            <person name="Vemulapalli V."/>
            <person name="Bedford M.T."/>
            <person name="Comb M.J."/>
        </authorList>
    </citation>
    <scope>METHYLATION [LARGE SCALE ANALYSIS] AT ARG-22</scope>
    <scope>IDENTIFICATION BY MASS SPECTROMETRY [LARGE SCALE ANALYSIS]</scope>
    <source>
        <tissue>Colon carcinoma</tissue>
    </source>
</reference>
<reference key="13">
    <citation type="journal article" date="2014" name="Nat. Commun.">
        <title>Global profiling of co- and post-translationally N-myristoylated proteomes in human cells.</title>
        <authorList>
            <person name="Thinon E."/>
            <person name="Serwa R.A."/>
            <person name="Broncel M."/>
            <person name="Brannigan J.A."/>
            <person name="Brassat U."/>
            <person name="Wright M.H."/>
            <person name="Heal W.P."/>
            <person name="Wilkinson A.J."/>
            <person name="Mann D.J."/>
            <person name="Tate E.W."/>
        </authorList>
    </citation>
    <scope>MYRISTOYLATION AT GLY-2</scope>
    <scope>CLEAVAGE OF INITIATOR METHIONINE</scope>
    <scope>IDENTIFICATION BY MASS SPECTROMETRY</scope>
</reference>
<reference key="14">
    <citation type="journal article" date="2015" name="Angew. Chem. Int. Ed.">
        <title>Multifunctional reagents for quantitative proteome-wide analysis of protein modification in human cells and dynamic profiling of protein lipidation during vertebrate development.</title>
        <authorList>
            <person name="Broncel M."/>
            <person name="Serwa R.A."/>
            <person name="Ciepla P."/>
            <person name="Krause E."/>
            <person name="Dallman M.J."/>
            <person name="Magee A.I."/>
            <person name="Tate E.W."/>
        </authorList>
    </citation>
    <scope>MYRISTOYLATION AT GLY-2</scope>
    <scope>CLEAVAGE OF INITIATOR METHIONINE</scope>
    <scope>IDENTIFICATION BY MASS SPECTROMETRY</scope>
</reference>
<comment type="catalytic activity">
    <reaction evidence="4">
        <text>O-phospho-L-seryl-[protein] + H2O = L-seryl-[protein] + phosphate</text>
        <dbReference type="Rhea" id="RHEA:20629"/>
        <dbReference type="Rhea" id="RHEA-COMP:9863"/>
        <dbReference type="Rhea" id="RHEA-COMP:11604"/>
        <dbReference type="ChEBI" id="CHEBI:15377"/>
        <dbReference type="ChEBI" id="CHEBI:29999"/>
        <dbReference type="ChEBI" id="CHEBI:43474"/>
        <dbReference type="ChEBI" id="CHEBI:83421"/>
        <dbReference type="EC" id="3.1.3.16"/>
    </reaction>
    <physiologicalReaction direction="left-to-right" evidence="8">
        <dbReference type="Rhea" id="RHEA:20630"/>
    </physiologicalReaction>
</comment>
<comment type="catalytic activity">
    <reaction evidence="3">
        <text>O-phospho-L-threonyl-[protein] + H2O = L-threonyl-[protein] + phosphate</text>
        <dbReference type="Rhea" id="RHEA:47004"/>
        <dbReference type="Rhea" id="RHEA-COMP:11060"/>
        <dbReference type="Rhea" id="RHEA-COMP:11605"/>
        <dbReference type="ChEBI" id="CHEBI:15377"/>
        <dbReference type="ChEBI" id="CHEBI:30013"/>
        <dbReference type="ChEBI" id="CHEBI:43474"/>
        <dbReference type="ChEBI" id="CHEBI:61977"/>
        <dbReference type="EC" id="3.1.3.16"/>
    </reaction>
    <physiologicalReaction direction="left-to-right" evidence="3">
        <dbReference type="Rhea" id="RHEA:47005"/>
    </physiologicalReaction>
</comment>
<comment type="cofactor">
    <cofactor evidence="2">
        <name>Mg(2+)</name>
        <dbReference type="ChEBI" id="CHEBI:18420"/>
    </cofactor>
    <cofactor evidence="2">
        <name>Mn(2+)</name>
        <dbReference type="ChEBI" id="CHEBI:29035"/>
    </cofactor>
    <text evidence="4">Binds 2 magnesium or manganese ions per subunit.</text>
</comment>
<comment type="subunit">
    <text evidence="1">Interacts with NOL3; may dephosphorylate NOL3.</text>
</comment>
<comment type="interaction">
    <interactant intactId="EBI-725702">
        <id>O15355</id>
    </interactant>
    <interactant intactId="EBI-1180783">
        <id>O96017</id>
        <label>CHEK2</label>
    </interactant>
    <organismsDiffer>false</organismsDiffer>
    <experiments>2</experiments>
</comment>
<comment type="interaction">
    <interactant intactId="EBI-725702">
        <id>O15355</id>
    </interactant>
    <interactant intactId="EBI-710997">
        <id>P54274</id>
        <label>TERF1</label>
    </interactant>
    <organismsDiffer>false</organismsDiffer>
    <experiments>2</experiments>
</comment>
<comment type="interaction">
    <interactant intactId="EBI-725702">
        <id>O15355</id>
    </interactant>
    <interactant intactId="EBI-357997">
        <id>P13010</id>
        <label>XRCC5</label>
    </interactant>
    <organismsDiffer>false</organismsDiffer>
    <experiments>4</experiments>
</comment>
<comment type="interaction">
    <interactant intactId="EBI-725702">
        <id>O15355</id>
    </interactant>
    <interactant intactId="EBI-353208">
        <id>P12956</id>
        <label>XRCC6</label>
    </interactant>
    <organismsDiffer>false</organismsDiffer>
    <experiments>4</experiments>
</comment>
<comment type="interaction">
    <interactant intactId="EBI-725702">
        <id>O15355</id>
    </interactant>
    <interactant intactId="EBI-354065">
        <id>P67809</id>
        <label>YBX1</label>
    </interactant>
    <organismsDiffer>false</organismsDiffer>
    <experiments>2</experiments>
</comment>
<comment type="interaction">
    <interactant intactId="EBI-725702">
        <id>O15355</id>
    </interactant>
    <interactant intactId="EBI-6164389">
        <id>P04608</id>
        <label>tat</label>
    </interactant>
    <organismsDiffer>true</organismsDiffer>
    <experiments>3</experiments>
</comment>
<comment type="subcellular location">
    <subcellularLocation>
        <location evidence="8">Cytoplasm</location>
    </subcellularLocation>
    <subcellularLocation>
        <location evidence="8">Membrane</location>
        <topology evidence="8">Lipid-anchor</topology>
    </subcellularLocation>
</comment>
<comment type="tissue specificity">
    <text>Widely expressed. Most abundant in testis, skeletal muscle, and heart.</text>
</comment>
<comment type="similarity">
    <text evidence="8">Belongs to the PP2C family.</text>
</comment>
<evidence type="ECO:0000250" key="1">
    <source>
        <dbReference type="UniProtKB" id="F1LNI5"/>
    </source>
</evidence>
<evidence type="ECO:0000250" key="2">
    <source>
        <dbReference type="UniProtKB" id="P35813"/>
    </source>
</evidence>
<evidence type="ECO:0000250" key="3">
    <source>
        <dbReference type="UniProtKB" id="P39966"/>
    </source>
</evidence>
<evidence type="ECO:0000255" key="4">
    <source>
        <dbReference type="PROSITE-ProRule" id="PRU01082"/>
    </source>
</evidence>
<evidence type="ECO:0000256" key="5">
    <source>
        <dbReference type="SAM" id="MobiDB-lite"/>
    </source>
</evidence>
<evidence type="ECO:0000269" key="6">
    <source>
    </source>
</evidence>
<evidence type="ECO:0000269" key="7">
    <source>
    </source>
</evidence>
<evidence type="ECO:0000305" key="8"/>
<evidence type="ECO:0007744" key="9">
    <source>
    </source>
</evidence>
<evidence type="ECO:0007744" key="10">
    <source>
    </source>
</evidence>
<evidence type="ECO:0007744" key="11">
    <source>
    </source>
</evidence>
<evidence type="ECO:0007744" key="12">
    <source>
    </source>
</evidence>
<evidence type="ECO:0007744" key="13">
    <source>
    </source>
</evidence>
<gene>
    <name type="primary">PPM1G</name>
    <name type="synonym">PPM1C</name>
</gene>